<sequence length="305" mass="34047">MSADSAPQRILLVTGLLGAGKTTALRTLEDMGWEAIDNFPIRLLDRLLETEPGSARMEPGAPMAIGFDTRTRGFDPSRTIELVKKLSQRSDLQITTLFLDCAGTELERRYNETRRRHPMSEDKPAATGIAAERELLEPLRRWADVVITTTSFTTNDLQQAIRDQFGGEIATPTTITISSFGFSRGMPPLADLVFDMRFLANPHWVDDLRPQTGRDKAVGEYIRKDPAFDEAFERIRDLLLLLLPRYQEQGKAYVHIAFGCTGGRHRSVFMAEQIASALREAGFSPTLLHRNLSSRAADLLEGVKG</sequence>
<feature type="chain" id="PRO_0000258977" description="Nucleotide-binding protein Saro_2904">
    <location>
        <begin position="1"/>
        <end position="305"/>
    </location>
</feature>
<feature type="binding site" evidence="1">
    <location>
        <begin position="15"/>
        <end position="22"/>
    </location>
    <ligand>
        <name>ATP</name>
        <dbReference type="ChEBI" id="CHEBI:30616"/>
    </ligand>
</feature>
<feature type="binding site" evidence="1">
    <location>
        <begin position="68"/>
        <end position="71"/>
    </location>
    <ligand>
        <name>GTP</name>
        <dbReference type="ChEBI" id="CHEBI:37565"/>
    </ligand>
</feature>
<gene>
    <name type="ordered locus">Saro_2904</name>
</gene>
<evidence type="ECO:0000255" key="1">
    <source>
        <dbReference type="HAMAP-Rule" id="MF_00636"/>
    </source>
</evidence>
<protein>
    <recommendedName>
        <fullName evidence="1">Nucleotide-binding protein Saro_2904</fullName>
    </recommendedName>
</protein>
<proteinExistence type="inferred from homology"/>
<keyword id="KW-0067">ATP-binding</keyword>
<keyword id="KW-0342">GTP-binding</keyword>
<keyword id="KW-0547">Nucleotide-binding</keyword>
<keyword id="KW-1185">Reference proteome</keyword>
<dbReference type="EMBL" id="CP000248">
    <property type="protein sequence ID" value="ABD27339.1"/>
    <property type="molecule type" value="Genomic_DNA"/>
</dbReference>
<dbReference type="RefSeq" id="WP_011446543.1">
    <property type="nucleotide sequence ID" value="NC_007794.1"/>
</dbReference>
<dbReference type="SMR" id="Q2G484"/>
<dbReference type="STRING" id="279238.Saro_2904"/>
<dbReference type="KEGG" id="nar:Saro_2904"/>
<dbReference type="eggNOG" id="COG1660">
    <property type="taxonomic scope" value="Bacteria"/>
</dbReference>
<dbReference type="HOGENOM" id="CLU_059558_0_0_5"/>
<dbReference type="Proteomes" id="UP000009134">
    <property type="component" value="Chromosome"/>
</dbReference>
<dbReference type="GO" id="GO:0005524">
    <property type="term" value="F:ATP binding"/>
    <property type="evidence" value="ECO:0007669"/>
    <property type="project" value="UniProtKB-UniRule"/>
</dbReference>
<dbReference type="GO" id="GO:0005525">
    <property type="term" value="F:GTP binding"/>
    <property type="evidence" value="ECO:0007669"/>
    <property type="project" value="UniProtKB-UniRule"/>
</dbReference>
<dbReference type="HAMAP" id="MF_00636">
    <property type="entry name" value="RapZ_like"/>
    <property type="match status" value="1"/>
</dbReference>
<dbReference type="InterPro" id="IPR027417">
    <property type="entry name" value="P-loop_NTPase"/>
</dbReference>
<dbReference type="InterPro" id="IPR005337">
    <property type="entry name" value="RapZ-like"/>
</dbReference>
<dbReference type="InterPro" id="IPR053930">
    <property type="entry name" value="RapZ-like_N"/>
</dbReference>
<dbReference type="InterPro" id="IPR053931">
    <property type="entry name" value="RapZ_C"/>
</dbReference>
<dbReference type="NCBIfam" id="NF003828">
    <property type="entry name" value="PRK05416.1"/>
    <property type="match status" value="1"/>
</dbReference>
<dbReference type="PANTHER" id="PTHR30448">
    <property type="entry name" value="RNASE ADAPTER PROTEIN RAPZ"/>
    <property type="match status" value="1"/>
</dbReference>
<dbReference type="PANTHER" id="PTHR30448:SF0">
    <property type="entry name" value="RNASE ADAPTER PROTEIN RAPZ"/>
    <property type="match status" value="1"/>
</dbReference>
<dbReference type="Pfam" id="PF22740">
    <property type="entry name" value="PapZ_C"/>
    <property type="match status" value="1"/>
</dbReference>
<dbReference type="Pfam" id="PF03668">
    <property type="entry name" value="RapZ-like_N"/>
    <property type="match status" value="1"/>
</dbReference>
<dbReference type="PIRSF" id="PIRSF005052">
    <property type="entry name" value="P-loopkin"/>
    <property type="match status" value="1"/>
</dbReference>
<dbReference type="SUPFAM" id="SSF52540">
    <property type="entry name" value="P-loop containing nucleoside triphosphate hydrolases"/>
    <property type="match status" value="1"/>
</dbReference>
<comment type="function">
    <text evidence="1">Displays ATPase and GTPase activities.</text>
</comment>
<comment type="similarity">
    <text evidence="1">Belongs to the RapZ-like family.</text>
</comment>
<accession>Q2G484</accession>
<organism>
    <name type="scientific">Novosphingobium aromaticivorans (strain ATCC 700278 / DSM 12444 / CCUG 56034 / CIP 105152 / NBRC 16084 / F199)</name>
    <dbReference type="NCBI Taxonomy" id="279238"/>
    <lineage>
        <taxon>Bacteria</taxon>
        <taxon>Pseudomonadati</taxon>
        <taxon>Pseudomonadota</taxon>
        <taxon>Alphaproteobacteria</taxon>
        <taxon>Sphingomonadales</taxon>
        <taxon>Sphingomonadaceae</taxon>
        <taxon>Novosphingobium</taxon>
    </lineage>
</organism>
<reference key="1">
    <citation type="submission" date="2006-01" db="EMBL/GenBank/DDBJ databases">
        <title>Complete sequence of Novosphingobium aromaticivorans DSM 12444.</title>
        <authorList>
            <consortium name="US DOE Joint Genome Institute"/>
            <person name="Copeland A."/>
            <person name="Lucas S."/>
            <person name="Lapidus A."/>
            <person name="Barry K."/>
            <person name="Detter J.C."/>
            <person name="Glavina T."/>
            <person name="Hammon N."/>
            <person name="Israni S."/>
            <person name="Pitluck S."/>
            <person name="Chain P."/>
            <person name="Malfatti S."/>
            <person name="Shin M."/>
            <person name="Vergez L."/>
            <person name="Schmutz J."/>
            <person name="Larimer F."/>
            <person name="Land M."/>
            <person name="Kyrpides N."/>
            <person name="Ivanova N."/>
            <person name="Fredrickson J."/>
            <person name="Balkwill D."/>
            <person name="Romine M.F."/>
            <person name="Richardson P."/>
        </authorList>
    </citation>
    <scope>NUCLEOTIDE SEQUENCE [LARGE SCALE GENOMIC DNA]</scope>
    <source>
        <strain>ATCC 700278 / DSM 12444 / CCUG 56034 / CIP 105152 / NBRC 16084 / F199</strain>
    </source>
</reference>
<name>Y2904_NOVAD</name>